<organism>
    <name type="scientific">Photorhabdus laumondii subsp. laumondii (strain DSM 15139 / CIP 105565 / TT01)</name>
    <name type="common">Photorhabdus luminescens subsp. laumondii</name>
    <dbReference type="NCBI Taxonomy" id="243265"/>
    <lineage>
        <taxon>Bacteria</taxon>
        <taxon>Pseudomonadati</taxon>
        <taxon>Pseudomonadota</taxon>
        <taxon>Gammaproteobacteria</taxon>
        <taxon>Enterobacterales</taxon>
        <taxon>Morganellaceae</taxon>
        <taxon>Photorhabdus</taxon>
    </lineage>
</organism>
<comment type="function">
    <text evidence="1">Sequence-specific endonuclease that cleaves unmethylated GATC sequences. It is involved in DNA mismatch repair.</text>
</comment>
<comment type="subcellular location">
    <subcellularLocation>
        <location evidence="1">Cytoplasm</location>
    </subcellularLocation>
</comment>
<comment type="similarity">
    <text evidence="1">Belongs to the MutH family.</text>
</comment>
<gene>
    <name evidence="1" type="primary">mutH</name>
    <name type="ordered locus">plu3678</name>
</gene>
<reference key="1">
    <citation type="journal article" date="2003" name="Nat. Biotechnol.">
        <title>The genome sequence of the entomopathogenic bacterium Photorhabdus luminescens.</title>
        <authorList>
            <person name="Duchaud E."/>
            <person name="Rusniok C."/>
            <person name="Frangeul L."/>
            <person name="Buchrieser C."/>
            <person name="Givaudan A."/>
            <person name="Taourit S."/>
            <person name="Bocs S."/>
            <person name="Boursaux-Eude C."/>
            <person name="Chandler M."/>
            <person name="Charles J.-F."/>
            <person name="Dassa E."/>
            <person name="Derose R."/>
            <person name="Derzelle S."/>
            <person name="Freyssinet G."/>
            <person name="Gaudriault S."/>
            <person name="Medigue C."/>
            <person name="Lanois A."/>
            <person name="Powell K."/>
            <person name="Siguier P."/>
            <person name="Vincent R."/>
            <person name="Wingate V."/>
            <person name="Zouine M."/>
            <person name="Glaser P."/>
            <person name="Boemare N."/>
            <person name="Danchin A."/>
            <person name="Kunst F."/>
        </authorList>
    </citation>
    <scope>NUCLEOTIDE SEQUENCE [LARGE SCALE GENOMIC DNA]</scope>
    <source>
        <strain>DSM 15139 / CIP 105565 / TT01</strain>
    </source>
</reference>
<feature type="chain" id="PRO_0000198671" description="DNA mismatch repair protein MutH">
    <location>
        <begin position="1"/>
        <end position="228"/>
    </location>
</feature>
<sequence length="228" mass="25529">MNTLFSPPSPPDNEQQLFECAQLLAGLSMGELAAKANLPIPPNLKRDKGWVGMLLEYYLGASAGSKPEQDFEHIGIELKTIPVDRRGYPLETTFVCVAPLTGNSGITWGSCHVRRKLSRVLWIPVEGEREIPLAKRRVGSPLLWSPNQEEEELLRRDWEELMDFIVLGKVESVTARHGEVLQLRPKAANSKALTEAIGVHGQPIMTLPRGFYLRKNFTAPLLARHFLI</sequence>
<accession>Q7N124</accession>
<dbReference type="EMBL" id="BX571871">
    <property type="protein sequence ID" value="CAE16051.1"/>
    <property type="molecule type" value="Genomic_DNA"/>
</dbReference>
<dbReference type="RefSeq" id="WP_011147841.1">
    <property type="nucleotide sequence ID" value="NC_005126.1"/>
</dbReference>
<dbReference type="SMR" id="Q7N124"/>
<dbReference type="STRING" id="243265.plu3678"/>
<dbReference type="GeneID" id="48849921"/>
<dbReference type="KEGG" id="plu:plu3678"/>
<dbReference type="eggNOG" id="COG3066">
    <property type="taxonomic scope" value="Bacteria"/>
</dbReference>
<dbReference type="HOGENOM" id="CLU_086669_0_0_6"/>
<dbReference type="OrthoDB" id="5634909at2"/>
<dbReference type="Proteomes" id="UP000002514">
    <property type="component" value="Chromosome"/>
</dbReference>
<dbReference type="GO" id="GO:0005737">
    <property type="term" value="C:cytoplasm"/>
    <property type="evidence" value="ECO:0007669"/>
    <property type="project" value="UniProtKB-SubCell"/>
</dbReference>
<dbReference type="GO" id="GO:0003677">
    <property type="term" value="F:DNA binding"/>
    <property type="evidence" value="ECO:0007669"/>
    <property type="project" value="InterPro"/>
</dbReference>
<dbReference type="GO" id="GO:0004519">
    <property type="term" value="F:endonuclease activity"/>
    <property type="evidence" value="ECO:0007669"/>
    <property type="project" value="UniProtKB-UniRule"/>
</dbReference>
<dbReference type="GO" id="GO:0006304">
    <property type="term" value="P:DNA modification"/>
    <property type="evidence" value="ECO:0007669"/>
    <property type="project" value="InterPro"/>
</dbReference>
<dbReference type="GO" id="GO:0006298">
    <property type="term" value="P:mismatch repair"/>
    <property type="evidence" value="ECO:0007669"/>
    <property type="project" value="UniProtKB-UniRule"/>
</dbReference>
<dbReference type="CDD" id="cd00583">
    <property type="entry name" value="MutH-like"/>
    <property type="match status" value="1"/>
</dbReference>
<dbReference type="FunFam" id="3.40.600.10:FF:000001">
    <property type="entry name" value="DNA mismatch repair protein MutH"/>
    <property type="match status" value="1"/>
</dbReference>
<dbReference type="Gene3D" id="3.40.600.10">
    <property type="entry name" value="DNA mismatch repair MutH/Restriction endonuclease, type II"/>
    <property type="match status" value="1"/>
</dbReference>
<dbReference type="HAMAP" id="MF_00759">
    <property type="entry name" value="MutH"/>
    <property type="match status" value="1"/>
</dbReference>
<dbReference type="InterPro" id="IPR004230">
    <property type="entry name" value="DNA_mismatch_repair_MutH"/>
</dbReference>
<dbReference type="InterPro" id="IPR011337">
    <property type="entry name" value="DNA_rep_MutH/RE_typeII_Sau3AI"/>
</dbReference>
<dbReference type="InterPro" id="IPR037057">
    <property type="entry name" value="DNA_rep_MutH/T2_RE_sf"/>
</dbReference>
<dbReference type="InterPro" id="IPR011335">
    <property type="entry name" value="Restrct_endonuc-II-like"/>
</dbReference>
<dbReference type="NCBIfam" id="TIGR02248">
    <property type="entry name" value="mutH_TIGR"/>
    <property type="match status" value="1"/>
</dbReference>
<dbReference type="NCBIfam" id="NF003458">
    <property type="entry name" value="PRK05070.1"/>
    <property type="match status" value="1"/>
</dbReference>
<dbReference type="Pfam" id="PF02976">
    <property type="entry name" value="MutH"/>
    <property type="match status" value="1"/>
</dbReference>
<dbReference type="SMART" id="SM00927">
    <property type="entry name" value="MutH"/>
    <property type="match status" value="1"/>
</dbReference>
<dbReference type="SUPFAM" id="SSF52980">
    <property type="entry name" value="Restriction endonuclease-like"/>
    <property type="match status" value="1"/>
</dbReference>
<evidence type="ECO:0000255" key="1">
    <source>
        <dbReference type="HAMAP-Rule" id="MF_00759"/>
    </source>
</evidence>
<keyword id="KW-0963">Cytoplasm</keyword>
<keyword id="KW-0227">DNA damage</keyword>
<keyword id="KW-0234">DNA repair</keyword>
<keyword id="KW-0255">Endonuclease</keyword>
<keyword id="KW-0378">Hydrolase</keyword>
<keyword id="KW-0540">Nuclease</keyword>
<keyword id="KW-1185">Reference proteome</keyword>
<protein>
    <recommendedName>
        <fullName evidence="1">DNA mismatch repair protein MutH</fullName>
    </recommendedName>
    <alternativeName>
        <fullName evidence="1">Methyl-directed mismatch repair protein</fullName>
    </alternativeName>
</protein>
<name>MUTH_PHOLL</name>
<proteinExistence type="inferred from homology"/>